<comment type="function">
    <text evidence="1">Beta toxins bind voltage-independently at site-4 of sodium channels (Nav) and shift the voltage of activation toward more negative potentials thereby affecting sodium channel activation and promoting spontaneous and repetitive firing.</text>
</comment>
<comment type="subcellular location">
    <subcellularLocation>
        <location evidence="1">Secreted</location>
    </subcellularLocation>
</comment>
<comment type="tissue specificity">
    <text>Expressed by the venom gland.</text>
</comment>
<comment type="domain">
    <text evidence="4">Has the structural arrangement of an alpha-helix connected to antiparallel beta-sheets by disulfide bonds (CS-alpha/beta).</text>
</comment>
<comment type="similarity">
    <text evidence="4">Belongs to the long (4 C-C) scorpion toxin superfamily. Sodium channel inhibitor family. Beta subfamily.</text>
</comment>
<sequence length="87" mass="9767">MNSLLMITACLFLIGTVWAKEGYLVNKSTGCKYECFWLGKNEFCDKECKAKNQGGSYGYCYSFACWCEGLPESTSTYPLPNKSCGRK</sequence>
<dbReference type="EMBL" id="AY649862">
    <property type="protein sequence ID" value="AAT97995.1"/>
    <property type="molecule type" value="mRNA"/>
</dbReference>
<dbReference type="SMR" id="Q68PH1"/>
<dbReference type="GO" id="GO:0005576">
    <property type="term" value="C:extracellular region"/>
    <property type="evidence" value="ECO:0007669"/>
    <property type="project" value="UniProtKB-SubCell"/>
</dbReference>
<dbReference type="GO" id="GO:0019871">
    <property type="term" value="F:sodium channel inhibitor activity"/>
    <property type="evidence" value="ECO:0007669"/>
    <property type="project" value="InterPro"/>
</dbReference>
<dbReference type="GO" id="GO:0090729">
    <property type="term" value="F:toxin activity"/>
    <property type="evidence" value="ECO:0007669"/>
    <property type="project" value="UniProtKB-KW"/>
</dbReference>
<dbReference type="GO" id="GO:0006952">
    <property type="term" value="P:defense response"/>
    <property type="evidence" value="ECO:0007669"/>
    <property type="project" value="InterPro"/>
</dbReference>
<dbReference type="CDD" id="cd23106">
    <property type="entry name" value="neurotoxins_LC_scorpion"/>
    <property type="match status" value="1"/>
</dbReference>
<dbReference type="FunFam" id="3.30.30.10:FF:000002">
    <property type="entry name" value="Alpha-like toxin BmK-M1"/>
    <property type="match status" value="1"/>
</dbReference>
<dbReference type="Gene3D" id="3.30.30.10">
    <property type="entry name" value="Knottin, scorpion toxin-like"/>
    <property type="match status" value="1"/>
</dbReference>
<dbReference type="InterPro" id="IPR044062">
    <property type="entry name" value="LCN-type_CS_alpha_beta_dom"/>
</dbReference>
<dbReference type="InterPro" id="IPR003614">
    <property type="entry name" value="Scorpion_toxin-like"/>
</dbReference>
<dbReference type="InterPro" id="IPR036574">
    <property type="entry name" value="Scorpion_toxin-like_sf"/>
</dbReference>
<dbReference type="InterPro" id="IPR018218">
    <property type="entry name" value="Scorpion_toxinL"/>
</dbReference>
<dbReference type="InterPro" id="IPR002061">
    <property type="entry name" value="Scorpion_toxinL/defensin"/>
</dbReference>
<dbReference type="Pfam" id="PF00537">
    <property type="entry name" value="Toxin_3"/>
    <property type="match status" value="1"/>
</dbReference>
<dbReference type="PRINTS" id="PR00285">
    <property type="entry name" value="SCORPNTOXIN"/>
</dbReference>
<dbReference type="SMART" id="SM00505">
    <property type="entry name" value="Knot1"/>
    <property type="match status" value="1"/>
</dbReference>
<dbReference type="SUPFAM" id="SSF57095">
    <property type="entry name" value="Scorpion toxin-like"/>
    <property type="match status" value="1"/>
</dbReference>
<dbReference type="PROSITE" id="PS51863">
    <property type="entry name" value="LCN_CSAB"/>
    <property type="match status" value="1"/>
</dbReference>
<organism>
    <name type="scientific">Centruroides exilicauda</name>
    <name type="common">Bark scorpion</name>
    <name type="synonym">Buthus exilicauda</name>
    <dbReference type="NCBI Taxonomy" id="6879"/>
    <lineage>
        <taxon>Eukaryota</taxon>
        <taxon>Metazoa</taxon>
        <taxon>Ecdysozoa</taxon>
        <taxon>Arthropoda</taxon>
        <taxon>Chelicerata</taxon>
        <taxon>Arachnida</taxon>
        <taxon>Scorpiones</taxon>
        <taxon>Buthida</taxon>
        <taxon>Buthoidea</taxon>
        <taxon>Buthidae</taxon>
        <taxon>Centruroides</taxon>
    </lineage>
</organism>
<evidence type="ECO:0000250" key="1"/>
<evidence type="ECO:0000255" key="2"/>
<evidence type="ECO:0000255" key="3">
    <source>
        <dbReference type="PROSITE-ProRule" id="PRU01210"/>
    </source>
</evidence>
<evidence type="ECO:0000305" key="4"/>
<reference key="1">
    <citation type="journal article" date="2004" name="Biochimie">
        <title>Biochemical, genetic and physiological characterization of venom components from two species of scorpions: Centruroides exilicauda Wood and Centruroides sculpturatus Ewing.</title>
        <authorList>
            <person name="Valdez-Cruz N.A."/>
            <person name="Davila S."/>
            <person name="Licea A."/>
            <person name="Corona M."/>
            <person name="Zamudio F.Z."/>
            <person name="Garcia-Valdes J."/>
            <person name="Boyer L."/>
            <person name="Possani L.D."/>
        </authorList>
    </citation>
    <scope>NUCLEOTIDE SEQUENCE [MRNA]</scope>
    <source>
        <tissue>Venom gland</tissue>
    </source>
</reference>
<name>SCX4_CENEX</name>
<proteinExistence type="evidence at transcript level"/>
<accession>Q68PH1</accession>
<keyword id="KW-0027">Amidation</keyword>
<keyword id="KW-1015">Disulfide bond</keyword>
<keyword id="KW-0872">Ion channel impairing toxin</keyword>
<keyword id="KW-0528">Neurotoxin</keyword>
<keyword id="KW-0964">Secreted</keyword>
<keyword id="KW-0732">Signal</keyword>
<keyword id="KW-0800">Toxin</keyword>
<keyword id="KW-0738">Voltage-gated sodium channel impairing toxin</keyword>
<protein>
    <recommendedName>
        <fullName>Neurotoxin Cex4</fullName>
    </recommendedName>
</protein>
<feature type="signal peptide" evidence="2">
    <location>
        <begin position="1"/>
        <end position="19"/>
    </location>
</feature>
<feature type="chain" id="PRO_0000254068" description="Neurotoxin Cex4">
    <location>
        <begin position="20"/>
        <end position="84"/>
    </location>
</feature>
<feature type="propeptide" id="PRO_0000254069">
    <location>
        <begin position="85"/>
        <end position="87"/>
    </location>
</feature>
<feature type="domain" description="LCN-type CS-alpha/beta" evidence="3">
    <location>
        <begin position="20"/>
        <end position="85"/>
    </location>
</feature>
<feature type="modified residue" description="Cysteine amide" evidence="2">
    <location>
        <position position="84"/>
    </location>
</feature>
<feature type="disulfide bond" evidence="3">
    <location>
        <begin position="31"/>
        <end position="84"/>
    </location>
</feature>
<feature type="disulfide bond" evidence="3">
    <location>
        <begin position="35"/>
        <end position="60"/>
    </location>
</feature>
<feature type="disulfide bond" evidence="3">
    <location>
        <begin position="44"/>
        <end position="65"/>
    </location>
</feature>
<feature type="disulfide bond" evidence="3">
    <location>
        <begin position="48"/>
        <end position="67"/>
    </location>
</feature>